<gene>
    <name type="primary">ARHGEF25</name>
    <name type="synonym">GEFT</name>
</gene>
<protein>
    <recommendedName>
        <fullName>Rho guanine nucleotide exchange factor 25</fullName>
    </recommendedName>
    <alternativeName>
        <fullName>Guanine nucleotide exchange factor GEFT</fullName>
    </alternativeName>
    <alternativeName>
        <fullName>Rac/Cdc42/Rho exchange factor GEFT</fullName>
    </alternativeName>
    <alternativeName>
        <fullName>RhoA/Rac/Cdc42 guanine nucleotide exchange factor GEFT</fullName>
    </alternativeName>
    <alternativeName>
        <fullName>p63RhoGEF</fullName>
    </alternativeName>
</protein>
<organism>
    <name type="scientific">Homo sapiens</name>
    <name type="common">Human</name>
    <dbReference type="NCBI Taxonomy" id="9606"/>
    <lineage>
        <taxon>Eukaryota</taxon>
        <taxon>Metazoa</taxon>
        <taxon>Chordata</taxon>
        <taxon>Craniata</taxon>
        <taxon>Vertebrata</taxon>
        <taxon>Euteleostomi</taxon>
        <taxon>Mammalia</taxon>
        <taxon>Eutheria</taxon>
        <taxon>Euarchontoglires</taxon>
        <taxon>Primates</taxon>
        <taxon>Haplorrhini</taxon>
        <taxon>Catarrhini</taxon>
        <taxon>Hominidae</taxon>
        <taxon>Homo</taxon>
    </lineage>
</organism>
<evidence type="ECO:0000250" key="1"/>
<evidence type="ECO:0000255" key="2">
    <source>
        <dbReference type="PROSITE-ProRule" id="PRU00062"/>
    </source>
</evidence>
<evidence type="ECO:0000255" key="3">
    <source>
        <dbReference type="PROSITE-ProRule" id="PRU00145"/>
    </source>
</evidence>
<evidence type="ECO:0000256" key="4">
    <source>
        <dbReference type="SAM" id="MobiDB-lite"/>
    </source>
</evidence>
<evidence type="ECO:0000269" key="5">
    <source>
    </source>
</evidence>
<evidence type="ECO:0000269" key="6">
    <source>
    </source>
</evidence>
<evidence type="ECO:0000269" key="7">
    <source>
    </source>
</evidence>
<evidence type="ECO:0000269" key="8">
    <source>
    </source>
</evidence>
<evidence type="ECO:0000269" key="9">
    <source>
    </source>
</evidence>
<evidence type="ECO:0000269" key="10">
    <source>
    </source>
</evidence>
<evidence type="ECO:0000269" key="11">
    <source>
    </source>
</evidence>
<evidence type="ECO:0000269" key="12">
    <source ref="2"/>
</evidence>
<evidence type="ECO:0000303" key="13">
    <source>
    </source>
</evidence>
<evidence type="ECO:0000303" key="14">
    <source ref="2"/>
</evidence>
<evidence type="ECO:0007829" key="15">
    <source>
        <dbReference type="PDB" id="2RGN"/>
    </source>
</evidence>
<reference key="1">
    <citation type="journal article" date="2003" name="J. Biol. Chem.">
        <title>A Rac/Cdc42-specific exchange factor, GEFT, induces cell proliferation, transformation, and migration.</title>
        <authorList>
            <person name="Guo X."/>
            <person name="Stafford L.J."/>
            <person name="Bryan B."/>
            <person name="Xia C."/>
            <person name="Ma W."/>
            <person name="Wu X."/>
            <person name="Liu D."/>
            <person name="Songyang Z."/>
            <person name="Liu M."/>
        </authorList>
    </citation>
    <scope>NUCLEOTIDE SEQUENCE [MRNA] (ISOFORM 1)</scope>
    <scope>FUNCTION</scope>
    <scope>INTERACTION WITH CDC42 AND RAC1</scope>
    <scope>TISSUE SPECIFICITY</scope>
    <scope>VARIANT TYR-253</scope>
</reference>
<reference key="2">
    <citation type="submission" date="2007-12" db="EMBL/GenBank/DDBJ databases">
        <title>Human cDNA derived from mRNA for adult brain.</title>
        <authorList>
            <person name="Nagase T."/>
            <person name="Kikuno R.F."/>
            <person name="Ohara O."/>
        </authorList>
    </citation>
    <scope>NUCLEOTIDE SEQUENCE [MRNA] (ISOFORM 3)</scope>
    <scope>VARIANT ARG-506</scope>
    <source>
        <tissue>Brain</tissue>
    </source>
</reference>
<reference key="3">
    <citation type="journal article" date="2006" name="Nature">
        <title>The finished DNA sequence of human chromosome 12.</title>
        <authorList>
            <person name="Scherer S.E."/>
            <person name="Muzny D.M."/>
            <person name="Buhay C.J."/>
            <person name="Chen R."/>
            <person name="Cree A."/>
            <person name="Ding Y."/>
            <person name="Dugan-Rocha S."/>
            <person name="Gill R."/>
            <person name="Gunaratne P."/>
            <person name="Harris R.A."/>
            <person name="Hawes A.C."/>
            <person name="Hernandez J."/>
            <person name="Hodgson A.V."/>
            <person name="Hume J."/>
            <person name="Jackson A."/>
            <person name="Khan Z.M."/>
            <person name="Kovar-Smith C."/>
            <person name="Lewis L.R."/>
            <person name="Lozado R.J."/>
            <person name="Metzker M.L."/>
            <person name="Milosavljevic A."/>
            <person name="Miner G.R."/>
            <person name="Montgomery K.T."/>
            <person name="Morgan M.B."/>
            <person name="Nazareth L.V."/>
            <person name="Scott G."/>
            <person name="Sodergren E."/>
            <person name="Song X.-Z."/>
            <person name="Steffen D."/>
            <person name="Lovering R.C."/>
            <person name="Wheeler D.A."/>
            <person name="Worley K.C."/>
            <person name="Yuan Y."/>
            <person name="Zhang Z."/>
            <person name="Adams C.Q."/>
            <person name="Ansari-Lari M.A."/>
            <person name="Ayele M."/>
            <person name="Brown M.J."/>
            <person name="Chen G."/>
            <person name="Chen Z."/>
            <person name="Clerc-Blankenburg K.P."/>
            <person name="Davis C."/>
            <person name="Delgado O."/>
            <person name="Dinh H.H."/>
            <person name="Draper H."/>
            <person name="Gonzalez-Garay M.L."/>
            <person name="Havlak P."/>
            <person name="Jackson L.R."/>
            <person name="Jacob L.S."/>
            <person name="Kelly S.H."/>
            <person name="Li L."/>
            <person name="Li Z."/>
            <person name="Liu J."/>
            <person name="Liu W."/>
            <person name="Lu J."/>
            <person name="Maheshwari M."/>
            <person name="Nguyen B.-V."/>
            <person name="Okwuonu G.O."/>
            <person name="Pasternak S."/>
            <person name="Perez L.M."/>
            <person name="Plopper F.J.H."/>
            <person name="Santibanez J."/>
            <person name="Shen H."/>
            <person name="Tabor P.E."/>
            <person name="Verduzco D."/>
            <person name="Waldron L."/>
            <person name="Wang Q."/>
            <person name="Williams G.A."/>
            <person name="Zhang J."/>
            <person name="Zhou J."/>
            <person name="Allen C.C."/>
            <person name="Amin A.G."/>
            <person name="Anyalebechi V."/>
            <person name="Bailey M."/>
            <person name="Barbaria J.A."/>
            <person name="Bimage K.E."/>
            <person name="Bryant N.P."/>
            <person name="Burch P.E."/>
            <person name="Burkett C.E."/>
            <person name="Burrell K.L."/>
            <person name="Calderon E."/>
            <person name="Cardenas V."/>
            <person name="Carter K."/>
            <person name="Casias K."/>
            <person name="Cavazos I."/>
            <person name="Cavazos S.R."/>
            <person name="Ceasar H."/>
            <person name="Chacko J."/>
            <person name="Chan S.N."/>
            <person name="Chavez D."/>
            <person name="Christopoulos C."/>
            <person name="Chu J."/>
            <person name="Cockrell R."/>
            <person name="Cox C.D."/>
            <person name="Dang M."/>
            <person name="Dathorne S.R."/>
            <person name="David R."/>
            <person name="Davis C.M."/>
            <person name="Davy-Carroll L."/>
            <person name="Deshazo D.R."/>
            <person name="Donlin J.E."/>
            <person name="D'Souza L."/>
            <person name="Eaves K.A."/>
            <person name="Egan A."/>
            <person name="Emery-Cohen A.J."/>
            <person name="Escotto M."/>
            <person name="Flagg N."/>
            <person name="Forbes L.D."/>
            <person name="Gabisi A.M."/>
            <person name="Garza M."/>
            <person name="Hamilton C."/>
            <person name="Henderson N."/>
            <person name="Hernandez O."/>
            <person name="Hines S."/>
            <person name="Hogues M.E."/>
            <person name="Huang M."/>
            <person name="Idlebird D.G."/>
            <person name="Johnson R."/>
            <person name="Jolivet A."/>
            <person name="Jones S."/>
            <person name="Kagan R."/>
            <person name="King L.M."/>
            <person name="Leal B."/>
            <person name="Lebow H."/>
            <person name="Lee S."/>
            <person name="LeVan J.M."/>
            <person name="Lewis L.C."/>
            <person name="London P."/>
            <person name="Lorensuhewa L.M."/>
            <person name="Loulseged H."/>
            <person name="Lovett D.A."/>
            <person name="Lucier A."/>
            <person name="Lucier R.L."/>
            <person name="Ma J."/>
            <person name="Madu R.C."/>
            <person name="Mapua P."/>
            <person name="Martindale A.D."/>
            <person name="Martinez E."/>
            <person name="Massey E."/>
            <person name="Mawhiney S."/>
            <person name="Meador M.G."/>
            <person name="Mendez S."/>
            <person name="Mercado C."/>
            <person name="Mercado I.C."/>
            <person name="Merritt C.E."/>
            <person name="Miner Z.L."/>
            <person name="Minja E."/>
            <person name="Mitchell T."/>
            <person name="Mohabbat F."/>
            <person name="Mohabbat K."/>
            <person name="Montgomery B."/>
            <person name="Moore N."/>
            <person name="Morris S."/>
            <person name="Munidasa M."/>
            <person name="Ngo R.N."/>
            <person name="Nguyen N.B."/>
            <person name="Nickerson E."/>
            <person name="Nwaokelemeh O.O."/>
            <person name="Nwokenkwo S."/>
            <person name="Obregon M."/>
            <person name="Oguh M."/>
            <person name="Oragunye N."/>
            <person name="Oviedo R.J."/>
            <person name="Parish B.J."/>
            <person name="Parker D.N."/>
            <person name="Parrish J."/>
            <person name="Parks K.L."/>
            <person name="Paul H.A."/>
            <person name="Payton B.A."/>
            <person name="Perez A."/>
            <person name="Perrin W."/>
            <person name="Pickens A."/>
            <person name="Primus E.L."/>
            <person name="Pu L.-L."/>
            <person name="Puazo M."/>
            <person name="Quiles M.M."/>
            <person name="Quiroz J.B."/>
            <person name="Rabata D."/>
            <person name="Reeves K."/>
            <person name="Ruiz S.J."/>
            <person name="Shao H."/>
            <person name="Sisson I."/>
            <person name="Sonaike T."/>
            <person name="Sorelle R.P."/>
            <person name="Sutton A.E."/>
            <person name="Svatek A.F."/>
            <person name="Svetz L.A."/>
            <person name="Tamerisa K.S."/>
            <person name="Taylor T.R."/>
            <person name="Teague B."/>
            <person name="Thomas N."/>
            <person name="Thorn R.D."/>
            <person name="Trejos Z.Y."/>
            <person name="Trevino B.K."/>
            <person name="Ukegbu O.N."/>
            <person name="Urban J.B."/>
            <person name="Vasquez L.I."/>
            <person name="Vera V.A."/>
            <person name="Villasana D.M."/>
            <person name="Wang L."/>
            <person name="Ward-Moore S."/>
            <person name="Warren J.T."/>
            <person name="Wei X."/>
            <person name="White F."/>
            <person name="Williamson A.L."/>
            <person name="Wleczyk R."/>
            <person name="Wooden H.S."/>
            <person name="Wooden S.H."/>
            <person name="Yen J."/>
            <person name="Yoon L."/>
            <person name="Yoon V."/>
            <person name="Zorrilla S.E."/>
            <person name="Nelson D."/>
            <person name="Kucherlapati R."/>
            <person name="Weinstock G."/>
            <person name="Gibbs R.A."/>
        </authorList>
    </citation>
    <scope>NUCLEOTIDE SEQUENCE [LARGE SCALE GENOMIC DNA]</scope>
</reference>
<reference key="4">
    <citation type="submission" date="2005-07" db="EMBL/GenBank/DDBJ databases">
        <authorList>
            <person name="Mural R.J."/>
            <person name="Istrail S."/>
            <person name="Sutton G.G."/>
            <person name="Florea L."/>
            <person name="Halpern A.L."/>
            <person name="Mobarry C.M."/>
            <person name="Lippert R."/>
            <person name="Walenz B."/>
            <person name="Shatkay H."/>
            <person name="Dew I."/>
            <person name="Miller J.R."/>
            <person name="Flanigan M.J."/>
            <person name="Edwards N.J."/>
            <person name="Bolanos R."/>
            <person name="Fasulo D."/>
            <person name="Halldorsson B.V."/>
            <person name="Hannenhalli S."/>
            <person name="Turner R."/>
            <person name="Yooseph S."/>
            <person name="Lu F."/>
            <person name="Nusskern D.R."/>
            <person name="Shue B.C."/>
            <person name="Zheng X.H."/>
            <person name="Zhong F."/>
            <person name="Delcher A.L."/>
            <person name="Huson D.H."/>
            <person name="Kravitz S.A."/>
            <person name="Mouchard L."/>
            <person name="Reinert K."/>
            <person name="Remington K.A."/>
            <person name="Clark A.G."/>
            <person name="Waterman M.S."/>
            <person name="Eichler E.E."/>
            <person name="Adams M.D."/>
            <person name="Hunkapiller M.W."/>
            <person name="Myers E.W."/>
            <person name="Venter J.C."/>
        </authorList>
    </citation>
    <scope>NUCLEOTIDE SEQUENCE [LARGE SCALE GENOMIC DNA]</scope>
</reference>
<reference key="5">
    <citation type="journal article" date="2004" name="Genome Res.">
        <title>The status, quality, and expansion of the NIH full-length cDNA project: the Mammalian Gene Collection (MGC).</title>
        <authorList>
            <consortium name="The MGC Project Team"/>
        </authorList>
    </citation>
    <scope>NUCLEOTIDE SEQUENCE [LARGE SCALE MRNA] (ISOFORMS 1 AND 2)</scope>
    <scope>VARIANTS TYR-253; ARG-397 AND ARG-506</scope>
    <source>
        <tissue>Brain</tissue>
    </source>
</reference>
<reference key="6">
    <citation type="journal article" date="2002" name="J. Cell Sci.">
        <title>Human p63RhoGEF, a novel RhoA-specific guanine nucleotide exchange factor, is localized in cardiac sarcomere.</title>
        <authorList>
            <person name="Souchet M."/>
            <person name="Portales-Casamar E."/>
            <person name="Mazurais D."/>
            <person name="Schmidt S."/>
            <person name="Leger I."/>
            <person name="Javre J.L."/>
            <person name="Robert P."/>
            <person name="Berrebi-Bertrand I."/>
            <person name="Bril A."/>
            <person name="Gout B."/>
            <person name="Debant A."/>
            <person name="Calmels T.P."/>
        </authorList>
    </citation>
    <scope>FUNCTION</scope>
    <scope>SUBCELLULAR LOCATION</scope>
    <scope>TISSUE SPECIFICITY</scope>
    <scope>MUTAGENESIS OF LEU-301</scope>
</reference>
<reference key="7">
    <citation type="journal article" date="2004" name="Naunyn Schmiedebergs Arch. Pharmacol.">
        <title>p63RhoGEF and GEFT are Rho-specific guanine nucleotide exchange factors encoded by the same gene.</title>
        <authorList>
            <person name="Lutz S."/>
            <person name="Freichel-Blomquist A."/>
            <person name="Rumenapp U."/>
            <person name="Schmidt M."/>
            <person name="Jakobs K.H."/>
            <person name="Wieland T."/>
        </authorList>
    </citation>
    <scope>FUNCTION</scope>
    <scope>TISSUE SPECIFICITY</scope>
</reference>
<reference key="8">
    <citation type="journal article" date="2005" name="J. Biol. Chem.">
        <title>The guanine nucleotide exchange factor p63RhoGEF, a specific link between Gq/11-coupled receptor signaling and RhoA.</title>
        <authorList>
            <person name="Lutz S."/>
            <person name="Freichel-Blomquist A."/>
            <person name="Yang Y."/>
            <person name="Rumenapp U."/>
            <person name="Jakobs K.H."/>
            <person name="Schmidt M."/>
            <person name="Wieland T."/>
        </authorList>
    </citation>
    <scope>FUNCTION</scope>
    <scope>INTERACTION WITH GNAQ AND GNA11</scope>
</reference>
<reference key="9">
    <citation type="journal article" date="2005" name="Mol. Cell. Biol.">
        <title>Modulation of muscle regeneration, myogenesis, and adipogenesis by the Rho family guanine nucleotide exchange factor GEFT.</title>
        <authorList>
            <person name="Bryan B.A."/>
            <person name="Mitchell D.C."/>
            <person name="Zhao L."/>
            <person name="Ma W."/>
            <person name="Stafford L.J."/>
            <person name="Teng B.B."/>
            <person name="Liu M."/>
        </authorList>
    </citation>
    <scope>FUNCTION</scope>
    <scope>INTERACTION WITH RHO-FAMILY SMALL GTPASES</scope>
</reference>
<reference key="10">
    <citation type="journal article" date="2007" name="J. Biol. Chem.">
        <title>Galphaq directly activates p63RhoGEF and Trio via a conserved extension of the Dbl homology-associated pleckstrin homology domain.</title>
        <authorList>
            <person name="Rojas R.J."/>
            <person name="Yohe M.E."/>
            <person name="Gershburg S."/>
            <person name="Kawano T."/>
            <person name="Kozasa T."/>
            <person name="Sondek J."/>
        </authorList>
    </citation>
    <scope>FUNCTION</scope>
    <scope>INTERACTION WITH GNAQ</scope>
    <scope>DOMAIN</scope>
    <scope>REGION</scope>
    <scope>MUTAGENESIS OF PHE-471; LEU-472; LEU-475; PRO-478 AND ILE-479</scope>
</reference>
<reference key="11">
    <citation type="journal article" date="2007" name="Science">
        <title>Structure of Galphaq-p63RhoGEF-RhoA complex reveals a pathway for the activation of RhoA by GPCRs.</title>
        <authorList>
            <person name="Lutz S."/>
            <person name="Shankaranarayanan A."/>
            <person name="Coco C."/>
            <person name="Ridilla M."/>
            <person name="Nance M.R."/>
            <person name="Vettel C."/>
            <person name="Baltus D."/>
            <person name="Evelyn C.R."/>
            <person name="Neubig R.R."/>
            <person name="Wieland T."/>
            <person name="Tesmer J.J."/>
        </authorList>
    </citation>
    <scope>X-RAY CRYSTALLOGRAPHY (3.5 ANGSTROMS) OF 149-502</scope>
</reference>
<dbReference type="EMBL" id="AF487514">
    <property type="protein sequence ID" value="AAO49463.2"/>
    <property type="molecule type" value="mRNA"/>
</dbReference>
<dbReference type="EMBL" id="AB370196">
    <property type="protein sequence ID" value="BAF94999.1"/>
    <property type="molecule type" value="mRNA"/>
</dbReference>
<dbReference type="EMBL" id="AC025165">
    <property type="status" value="NOT_ANNOTATED_CDS"/>
    <property type="molecule type" value="Genomic_DNA"/>
</dbReference>
<dbReference type="EMBL" id="CH471054">
    <property type="protein sequence ID" value="EAW97037.1"/>
    <property type="molecule type" value="Genomic_DNA"/>
</dbReference>
<dbReference type="EMBL" id="BC012860">
    <property type="protein sequence ID" value="AAH12860.1"/>
    <property type="molecule type" value="mRNA"/>
</dbReference>
<dbReference type="EMBL" id="BC018536">
    <property type="protein sequence ID" value="AAH18536.1"/>
    <property type="molecule type" value="mRNA"/>
</dbReference>
<dbReference type="EMBL" id="BC047559">
    <property type="protein sequence ID" value="AAH47559.1"/>
    <property type="molecule type" value="mRNA"/>
</dbReference>
<dbReference type="CCDS" id="CCDS44931.1">
    <molecule id="Q86VW2-3"/>
</dbReference>
<dbReference type="CCDS" id="CCDS8947.1">
    <molecule id="Q86VW2-1"/>
</dbReference>
<dbReference type="RefSeq" id="NP_001104740.2">
    <molecule id="Q86VW2-3"/>
    <property type="nucleotide sequence ID" value="NM_001111270.3"/>
</dbReference>
<dbReference type="RefSeq" id="NP_001334862.1">
    <property type="nucleotide sequence ID" value="NM_001347933.1"/>
</dbReference>
<dbReference type="RefSeq" id="NP_891992.3">
    <molecule id="Q86VW2-1"/>
    <property type="nucleotide sequence ID" value="NM_182947.4"/>
</dbReference>
<dbReference type="PDB" id="2RGN">
    <property type="method" value="X-ray"/>
    <property type="resolution" value="3.50 A"/>
    <property type="chains" value="B/E=149-502"/>
</dbReference>
<dbReference type="PDBsum" id="2RGN"/>
<dbReference type="SMR" id="Q86VW2"/>
<dbReference type="BioGRID" id="125438">
    <property type="interactions" value="31"/>
</dbReference>
<dbReference type="CORUM" id="Q86VW2"/>
<dbReference type="FunCoup" id="Q86VW2">
    <property type="interactions" value="616"/>
</dbReference>
<dbReference type="IntAct" id="Q86VW2">
    <property type="interactions" value="9"/>
</dbReference>
<dbReference type="STRING" id="9606.ENSP00000335560"/>
<dbReference type="GlyGen" id="Q86VW2">
    <property type="glycosylation" value="2 sites, 1 O-linked glycan (1 site)"/>
</dbReference>
<dbReference type="iPTMnet" id="Q86VW2"/>
<dbReference type="PhosphoSitePlus" id="Q86VW2"/>
<dbReference type="SwissPalm" id="Q86VW2"/>
<dbReference type="BioMuta" id="ARHGEF25"/>
<dbReference type="DMDM" id="172046695"/>
<dbReference type="jPOST" id="Q86VW2"/>
<dbReference type="MassIVE" id="Q86VW2"/>
<dbReference type="PaxDb" id="9606-ENSP00000335560"/>
<dbReference type="PeptideAtlas" id="Q86VW2"/>
<dbReference type="ProteomicsDB" id="30042"/>
<dbReference type="ProteomicsDB" id="70082">
    <molecule id="Q86VW2-1"/>
</dbReference>
<dbReference type="ProteomicsDB" id="70083">
    <molecule id="Q86VW2-2"/>
</dbReference>
<dbReference type="Antibodypedia" id="34950">
    <property type="antibodies" value="73 antibodies from 17 providers"/>
</dbReference>
<dbReference type="DNASU" id="115557"/>
<dbReference type="Ensembl" id="ENST00000286494.9">
    <molecule id="Q86VW2-1"/>
    <property type="protein sequence ID" value="ENSP00000286494.4"/>
    <property type="gene ID" value="ENSG00000240771.8"/>
</dbReference>
<dbReference type="Ensembl" id="ENST00000333972.11">
    <molecule id="Q86VW2-3"/>
    <property type="protein sequence ID" value="ENSP00000335560.7"/>
    <property type="gene ID" value="ENSG00000240771.8"/>
</dbReference>
<dbReference type="Ensembl" id="ENST00000616622.1">
    <molecule id="Q86VW2-2"/>
    <property type="protein sequence ID" value="ENSP00000484303.1"/>
    <property type="gene ID" value="ENSG00000240771.8"/>
</dbReference>
<dbReference type="GeneID" id="115557"/>
<dbReference type="KEGG" id="hsa:115557"/>
<dbReference type="MANE-Select" id="ENST00000286494.9">
    <property type="protein sequence ID" value="ENSP00000286494.4"/>
    <property type="RefSeq nucleotide sequence ID" value="NM_182947.4"/>
    <property type="RefSeq protein sequence ID" value="NP_891992.3"/>
</dbReference>
<dbReference type="UCSC" id="uc001spa.5">
    <molecule id="Q86VW2-1"/>
    <property type="organism name" value="human"/>
</dbReference>
<dbReference type="AGR" id="HGNC:30275"/>
<dbReference type="CTD" id="115557"/>
<dbReference type="DisGeNET" id="115557"/>
<dbReference type="GeneCards" id="ARHGEF25"/>
<dbReference type="HGNC" id="HGNC:30275">
    <property type="gene designation" value="ARHGEF25"/>
</dbReference>
<dbReference type="HPA" id="ENSG00000240771">
    <property type="expression patterns" value="Low tissue specificity"/>
</dbReference>
<dbReference type="MalaCards" id="ARHGEF25"/>
<dbReference type="MIM" id="610215">
    <property type="type" value="gene"/>
</dbReference>
<dbReference type="neXtProt" id="NX_Q86VW2"/>
<dbReference type="OpenTargets" id="ENSG00000240771"/>
<dbReference type="VEuPathDB" id="HostDB:ENSG00000240771"/>
<dbReference type="eggNOG" id="KOG0689">
    <property type="taxonomic scope" value="Eukaryota"/>
</dbReference>
<dbReference type="GeneTree" id="ENSGT00940000160422"/>
<dbReference type="HOGENOM" id="CLU_001356_6_0_1"/>
<dbReference type="InParanoid" id="Q86VW2"/>
<dbReference type="OMA" id="HAVEVMC"/>
<dbReference type="OrthoDB" id="10256089at2759"/>
<dbReference type="PAN-GO" id="Q86VW2">
    <property type="GO annotations" value="5 GO annotations based on evolutionary models"/>
</dbReference>
<dbReference type="PhylomeDB" id="Q86VW2"/>
<dbReference type="TreeFam" id="TF318080"/>
<dbReference type="PathwayCommons" id="Q86VW2"/>
<dbReference type="Reactome" id="R-HSA-416476">
    <property type="pathway name" value="G alpha (q) signalling events"/>
</dbReference>
<dbReference type="Reactome" id="R-HSA-8980692">
    <property type="pathway name" value="RHOA GTPase cycle"/>
</dbReference>
<dbReference type="Reactome" id="R-HSA-9013026">
    <property type="pathway name" value="RHOB GTPase cycle"/>
</dbReference>
<dbReference type="Reactome" id="R-HSA-9013106">
    <property type="pathway name" value="RHOC GTPase cycle"/>
</dbReference>
<dbReference type="Reactome" id="R-HSA-9013148">
    <property type="pathway name" value="CDC42 GTPase cycle"/>
</dbReference>
<dbReference type="Reactome" id="R-HSA-9013149">
    <property type="pathway name" value="RAC1 GTPase cycle"/>
</dbReference>
<dbReference type="SignaLink" id="Q86VW2"/>
<dbReference type="SIGNOR" id="Q86VW2"/>
<dbReference type="BioGRID-ORCS" id="115557">
    <property type="hits" value="26 hits in 1159 CRISPR screens"/>
</dbReference>
<dbReference type="EvolutionaryTrace" id="Q86VW2"/>
<dbReference type="GeneWiki" id="GEFT"/>
<dbReference type="GenomeRNAi" id="115557"/>
<dbReference type="Pharos" id="Q86VW2">
    <property type="development level" value="Tbio"/>
</dbReference>
<dbReference type="PRO" id="PR:Q86VW2"/>
<dbReference type="Proteomes" id="UP000005640">
    <property type="component" value="Chromosome 12"/>
</dbReference>
<dbReference type="RNAct" id="Q86VW2">
    <property type="molecule type" value="protein"/>
</dbReference>
<dbReference type="Bgee" id="ENSG00000240771">
    <property type="expression patterns" value="Expressed in right hemisphere of cerebellum and 99 other cell types or tissues"/>
</dbReference>
<dbReference type="ExpressionAtlas" id="Q86VW2">
    <property type="expression patterns" value="baseline and differential"/>
</dbReference>
<dbReference type="GO" id="GO:0005737">
    <property type="term" value="C:cytoplasm"/>
    <property type="evidence" value="ECO:0000318"/>
    <property type="project" value="GO_Central"/>
</dbReference>
<dbReference type="GO" id="GO:0005829">
    <property type="term" value="C:cytosol"/>
    <property type="evidence" value="ECO:0000304"/>
    <property type="project" value="Reactome"/>
</dbReference>
<dbReference type="GO" id="GO:0019898">
    <property type="term" value="C:extrinsic component of membrane"/>
    <property type="evidence" value="ECO:0000318"/>
    <property type="project" value="GO_Central"/>
</dbReference>
<dbReference type="GO" id="GO:0030016">
    <property type="term" value="C:myofibril"/>
    <property type="evidence" value="ECO:0000250"/>
    <property type="project" value="UniProtKB"/>
</dbReference>
<dbReference type="GO" id="GO:0005886">
    <property type="term" value="C:plasma membrane"/>
    <property type="evidence" value="ECO:0000250"/>
    <property type="project" value="UniProtKB"/>
</dbReference>
<dbReference type="GO" id="GO:0030017">
    <property type="term" value="C:sarcomere"/>
    <property type="evidence" value="ECO:0007669"/>
    <property type="project" value="UniProtKB-SubCell"/>
</dbReference>
<dbReference type="GO" id="GO:0005085">
    <property type="term" value="F:guanyl-nucleotide exchange factor activity"/>
    <property type="evidence" value="ECO:0000318"/>
    <property type="project" value="GO_Central"/>
</dbReference>
<dbReference type="GO" id="GO:0007411">
    <property type="term" value="P:axon guidance"/>
    <property type="evidence" value="ECO:0000318"/>
    <property type="project" value="GO_Central"/>
</dbReference>
<dbReference type="GO" id="GO:0051056">
    <property type="term" value="P:regulation of small GTPase mediated signal transduction"/>
    <property type="evidence" value="ECO:0000304"/>
    <property type="project" value="Reactome"/>
</dbReference>
<dbReference type="CDD" id="cd13241">
    <property type="entry name" value="PH2_Kalirin_Trio_p63RhoGEF"/>
    <property type="match status" value="1"/>
</dbReference>
<dbReference type="CDD" id="cd00160">
    <property type="entry name" value="RhoGEF"/>
    <property type="match status" value="1"/>
</dbReference>
<dbReference type="FunFam" id="2.30.29.30:FF:000184">
    <property type="entry name" value="Rho guanine nucleotide exchange factor (GEF) 25"/>
    <property type="match status" value="1"/>
</dbReference>
<dbReference type="FunFam" id="1.20.900.10:FF:000008">
    <property type="entry name" value="rho guanine nucleotide exchange factor 25"/>
    <property type="match status" value="1"/>
</dbReference>
<dbReference type="Gene3D" id="1.20.900.10">
    <property type="entry name" value="Dbl homology (DH) domain"/>
    <property type="match status" value="1"/>
</dbReference>
<dbReference type="Gene3D" id="2.30.29.30">
    <property type="entry name" value="Pleckstrin-homology domain (PH domain)/Phosphotyrosine-binding domain (PTB)"/>
    <property type="match status" value="1"/>
</dbReference>
<dbReference type="InterPro" id="IPR035899">
    <property type="entry name" value="DBL_dom_sf"/>
</dbReference>
<dbReference type="InterPro" id="IPR000219">
    <property type="entry name" value="DH_dom"/>
</dbReference>
<dbReference type="InterPro" id="IPR011993">
    <property type="entry name" value="PH-like_dom_sf"/>
</dbReference>
<dbReference type="InterPro" id="IPR001849">
    <property type="entry name" value="PH_domain"/>
</dbReference>
<dbReference type="InterPro" id="IPR051336">
    <property type="entry name" value="RhoGEF_Guanine_NuclExch_SF"/>
</dbReference>
<dbReference type="InterPro" id="IPR055251">
    <property type="entry name" value="SOS1_NGEF_PH"/>
</dbReference>
<dbReference type="PANTHER" id="PTHR22826:SF117">
    <property type="entry name" value="PLECKSTRIN HOMOLOGY DOMAIN-CONTAINING FAMILY G MEMBER 4B-RELATED"/>
    <property type="match status" value="1"/>
</dbReference>
<dbReference type="PANTHER" id="PTHR22826">
    <property type="entry name" value="RHO GUANINE EXCHANGE FACTOR-RELATED"/>
    <property type="match status" value="1"/>
</dbReference>
<dbReference type="Pfam" id="PF00621">
    <property type="entry name" value="RhoGEF"/>
    <property type="match status" value="1"/>
</dbReference>
<dbReference type="Pfam" id="PF22697">
    <property type="entry name" value="SOS1_NGEF_PH"/>
    <property type="match status" value="1"/>
</dbReference>
<dbReference type="SMART" id="SM00325">
    <property type="entry name" value="RhoGEF"/>
    <property type="match status" value="1"/>
</dbReference>
<dbReference type="SUPFAM" id="SSF48065">
    <property type="entry name" value="DBL homology domain (DH-domain)"/>
    <property type="match status" value="1"/>
</dbReference>
<dbReference type="SUPFAM" id="SSF50729">
    <property type="entry name" value="PH domain-like"/>
    <property type="match status" value="1"/>
</dbReference>
<dbReference type="PROSITE" id="PS50010">
    <property type="entry name" value="DH_2"/>
    <property type="match status" value="1"/>
</dbReference>
<dbReference type="PROSITE" id="PS50003">
    <property type="entry name" value="PH_DOMAIN"/>
    <property type="match status" value="1"/>
</dbReference>
<name>ARHGP_HUMAN</name>
<keyword id="KW-0002">3D-structure</keyword>
<keyword id="KW-0025">Alternative splicing</keyword>
<keyword id="KW-1003">Cell membrane</keyword>
<keyword id="KW-0963">Cytoplasm</keyword>
<keyword id="KW-0344">Guanine-nucleotide releasing factor</keyword>
<keyword id="KW-0472">Membrane</keyword>
<keyword id="KW-1267">Proteomics identification</keyword>
<keyword id="KW-1185">Reference proteome</keyword>
<sequence>MRGGHKGGRCACPRVIRKVLAKCGCCFARGGRESYSIAGSEGSISASAASGLAAPSGPSSGLSSGPCSPGPPGPVSGLRRWLDHSKHCLSVETEADSGQAGPYENWMLEPALATGEELPELTLLTTLLEGPGDKTQPPEEETLSQAPESEEEQKKKALERSMYVLSELVETEKMYVDDLGQIVEGYMATMAAQGVPESLRGRDRIVFGNIQQIYEWHRDYFLQELQRCLKDPDWLAQLFIKHERRLHMYVVYCQNKPKSEHVVSEFGDSYFEELRQQLGHRLQLNDLLIKPVQRIMKYQLLLKDFLKYYNRAGMDTADLEQAVEVMCFVPKRCNDMMTLGRLRGFEGKLTAQGKLLGQDTFWVTEPEAGGLLSSRGRERRVFLFEQIIIFSEALGGGVRGGTQPGYVYKNSIKVSCLGLEGNLQGDPCRFALTSRGPEGGIQRYVLQAADPAISQAWIKHVAQILESQRDFLNALQSPIEYQRRESQTNSLGRPRGPGVGSPGRIQLGDQAQGSTHTPINGSLPSLLLSPKGEVARALLPLDKQALGDIPQAPHDSPPVSPTPKTPPCQARLAKLDEDEL</sequence>
<feature type="chain" id="PRO_0000322132" description="Rho guanine nucleotide exchange factor 25">
    <location>
        <begin position="1"/>
        <end position="580"/>
    </location>
</feature>
<feature type="domain" description="DH" evidence="2">
    <location>
        <begin position="160"/>
        <end position="336"/>
    </location>
</feature>
<feature type="domain" description="PH" evidence="3">
    <location>
        <begin position="348"/>
        <end position="466"/>
    </location>
</feature>
<feature type="region of interest" description="Disordered" evidence="4">
    <location>
        <begin position="48"/>
        <end position="76"/>
    </location>
</feature>
<feature type="region of interest" description="Disordered" evidence="4">
    <location>
        <begin position="128"/>
        <end position="157"/>
    </location>
</feature>
<feature type="region of interest" description="Important for binding to Rho GTPases">
    <location>
        <begin position="278"/>
        <end position="299"/>
    </location>
</feature>
<feature type="region of interest" description="Sufficient to bind activated GNAQ">
    <location>
        <begin position="467"/>
        <end position="493"/>
    </location>
</feature>
<feature type="region of interest" description="Disordered" evidence="4">
    <location>
        <begin position="482"/>
        <end position="524"/>
    </location>
</feature>
<feature type="region of interest" description="Disordered" evidence="4">
    <location>
        <begin position="545"/>
        <end position="580"/>
    </location>
</feature>
<feature type="compositionally biased region" description="Low complexity" evidence="4">
    <location>
        <begin position="48"/>
        <end position="67"/>
    </location>
</feature>
<feature type="compositionally biased region" description="Polar residues" evidence="4">
    <location>
        <begin position="509"/>
        <end position="520"/>
    </location>
</feature>
<feature type="compositionally biased region" description="Pro residues" evidence="4">
    <location>
        <begin position="555"/>
        <end position="566"/>
    </location>
</feature>
<feature type="splice variant" id="VSP_031875" description="In isoform 2." evidence="13">
    <location>
        <begin position="1"/>
        <end position="106"/>
    </location>
</feature>
<feature type="splice variant" id="VSP_047254" description="In isoform 3." evidence="14">
    <original>MRGGHKGGRCACPRVIRKVLAKCGCCFARGGR</original>
    <variation>MKPPDRPAPGRTDRILGVMGGMLRACALPGQEGPPRRSPLGLVGTEPESERTEGDHRRDREHEVLAGALQP</variation>
    <location>
        <begin position="1"/>
        <end position="32"/>
    </location>
</feature>
<feature type="sequence variant" id="VAR_039402" description="In dbSNP:rs17857333." evidence="6 8">
    <original>C</original>
    <variation>Y</variation>
    <location>
        <position position="253"/>
    </location>
</feature>
<feature type="sequence variant" id="VAR_039403" description="In dbSNP:rs17854492." evidence="8">
    <original>G</original>
    <variation>R</variation>
    <location>
        <position position="397"/>
    </location>
</feature>
<feature type="sequence variant" id="VAR_039404" description="In dbSNP:rs1564374." evidence="8 12">
    <original>Q</original>
    <variation>R</variation>
    <location>
        <position position="506"/>
    </location>
</feature>
<feature type="mutagenesis site" description="Abolishes its exchange activity on RHOA." evidence="5">
    <original>L</original>
    <variation>E</variation>
    <location>
        <position position="301"/>
    </location>
</feature>
<feature type="mutagenesis site" description="Reduces exchange activity mediated by GNAQ activation; in truncated construct." evidence="11">
    <original>F</original>
    <variation>A</variation>
    <location>
        <position position="471"/>
    </location>
</feature>
<feature type="mutagenesis site" description="Reduces exchange activity mediated by GNAQ activation; in truncated construct." evidence="11">
    <original>L</original>
    <variation>A</variation>
    <location>
        <position position="472"/>
    </location>
</feature>
<feature type="mutagenesis site" description="Reduces exchange activity mediated by GNAQ activation; in truncated construct." evidence="11">
    <original>L</original>
    <variation>A</variation>
    <location>
        <position position="475"/>
    </location>
</feature>
<feature type="mutagenesis site" description="Reduces exchange activity mediated by GNAQ activation; in truncated construct." evidence="11">
    <original>P</original>
    <variation>A</variation>
    <location>
        <position position="478"/>
    </location>
</feature>
<feature type="mutagenesis site" description="Reduces exchange activity mediated by GNAQ activation; in truncated construct." evidence="11">
    <original>I</original>
    <variation>A</variation>
    <location>
        <position position="479"/>
    </location>
</feature>
<feature type="helix" evidence="15">
    <location>
        <begin position="151"/>
        <end position="154"/>
    </location>
</feature>
<feature type="helix" evidence="15">
    <location>
        <begin position="156"/>
        <end position="183"/>
    </location>
</feature>
<feature type="helix" evidence="15">
    <location>
        <begin position="186"/>
        <end position="193"/>
    </location>
</feature>
<feature type="strand" evidence="15">
    <location>
        <begin position="197"/>
        <end position="199"/>
    </location>
</feature>
<feature type="helix" evidence="15">
    <location>
        <begin position="200"/>
        <end position="202"/>
    </location>
</feature>
<feature type="helix" evidence="15">
    <location>
        <begin position="203"/>
        <end position="207"/>
    </location>
</feature>
<feature type="helix" evidence="15">
    <location>
        <begin position="210"/>
        <end position="219"/>
    </location>
</feature>
<feature type="helix" evidence="15">
    <location>
        <begin position="221"/>
        <end position="229"/>
    </location>
</feature>
<feature type="helix" evidence="15">
    <location>
        <begin position="232"/>
        <end position="234"/>
    </location>
</feature>
<feature type="helix" evidence="15">
    <location>
        <begin position="235"/>
        <end position="241"/>
    </location>
</feature>
<feature type="turn" evidence="15">
    <location>
        <begin position="242"/>
        <end position="246"/>
    </location>
</feature>
<feature type="helix" evidence="15">
    <location>
        <begin position="247"/>
        <end position="254"/>
    </location>
</feature>
<feature type="helix" evidence="15">
    <location>
        <begin position="257"/>
        <end position="263"/>
    </location>
</feature>
<feature type="turn" evidence="15">
    <location>
        <begin position="264"/>
        <end position="266"/>
    </location>
</feature>
<feature type="helix" evidence="15">
    <location>
        <begin position="268"/>
        <end position="278"/>
    </location>
</feature>
<feature type="helix" evidence="15">
    <location>
        <begin position="284"/>
        <end position="287"/>
    </location>
</feature>
<feature type="helix" evidence="15">
    <location>
        <begin position="290"/>
        <end position="295"/>
    </location>
</feature>
<feature type="helix" evidence="15">
    <location>
        <begin position="298"/>
        <end position="308"/>
    </location>
</feature>
<feature type="strand" evidence="15">
    <location>
        <begin position="310"/>
        <end position="312"/>
    </location>
</feature>
<feature type="helix" evidence="15">
    <location>
        <begin position="316"/>
        <end position="338"/>
    </location>
</feature>
<feature type="helix" evidence="15">
    <location>
        <begin position="339"/>
        <end position="341"/>
    </location>
</feature>
<feature type="strand" evidence="15">
    <location>
        <begin position="355"/>
        <end position="364"/>
    </location>
</feature>
<feature type="strand" evidence="15">
    <location>
        <begin position="378"/>
        <end position="393"/>
    </location>
</feature>
<feature type="strand" evidence="15">
    <location>
        <begin position="406"/>
        <end position="413"/>
    </location>
</feature>
<feature type="helix" evidence="15">
    <location>
        <begin position="414"/>
        <end position="416"/>
    </location>
</feature>
<feature type="strand" evidence="15">
    <location>
        <begin position="417"/>
        <end position="422"/>
    </location>
</feature>
<feature type="helix" evidence="15">
    <location>
        <begin position="423"/>
        <end position="425"/>
    </location>
</feature>
<feature type="strand" evidence="15">
    <location>
        <begin position="429"/>
        <end position="435"/>
    </location>
</feature>
<feature type="strand" evidence="15">
    <location>
        <begin position="437"/>
        <end position="439"/>
    </location>
</feature>
<feature type="strand" evidence="15">
    <location>
        <begin position="441"/>
        <end position="450"/>
    </location>
</feature>
<feature type="helix" evidence="15">
    <location>
        <begin position="451"/>
        <end position="475"/>
    </location>
</feature>
<feature type="helix" evidence="15">
    <location>
        <begin position="478"/>
        <end position="489"/>
    </location>
</feature>
<proteinExistence type="evidence at protein level"/>
<accession>Q86VW2</accession>
<accession>A6NJH5</accession>
<accession>A9CQZ6</accession>
<accession>F8W7Z4</accession>
<accession>Q8WV84</accession>
<accession>Q96E63</accession>
<comment type="function">
    <text evidence="1 5 6 7 9 10 11">May play a role in actin cytoskeleton reorganization in different tissues since its activation induces formation of actin stress fibers. It works as a guanine nucleotide exchange factor for Rho family of small GTPases. Links specifically G alpha q/11-coupled receptors to RHOA activation. May be an important regulator of processes involved in axon and dendrite formation. In neurons seems to be an exchange factor primarily for RAC1. Involved in skeletal myogenesis (By similarity).</text>
</comment>
<comment type="subunit">
    <text evidence="1 6 9 10 11">Interacts (via the DH domain) with POPDC1 (via the C-terminus cytoplasmic tail) (By similarity). Interacts with activated GNAQ and GNA11. Interacts with RHOA, CDC42 and RAC1.</text>
</comment>
<comment type="subcellular location">
    <subcellularLocation>
        <location evidence="1">Cell membrane</location>
    </subcellularLocation>
    <subcellularLocation>
        <location evidence="5">Cytoplasm</location>
        <location evidence="5">Myofibril</location>
        <location evidence="5">Sarcomere</location>
    </subcellularLocation>
    <text>Highly colocalizes with actin regions.</text>
</comment>
<comment type="alternative products">
    <event type="alternative splicing"/>
    <isoform>
        <id>Q86VW2-1</id>
        <name>1</name>
        <sequence type="displayed"/>
    </isoform>
    <isoform>
        <id>Q86VW2-2</id>
        <name>2</name>
        <name>p63RhoGef</name>
        <sequence type="described" ref="VSP_031875"/>
    </isoform>
    <isoform>
        <id>Q86VW2-3</id>
        <name>3</name>
        <sequence type="described" ref="VSP_047254"/>
    </isoform>
</comment>
<comment type="tissue specificity">
    <text evidence="5 6 7">Isoform 1 and isoform 2 are highly expressed in excitable tissues, such as brain, heart and muscle. Also detected in kidney and liver.</text>
</comment>
<comment type="domain">
    <text evidence="11">The guanine nucleotide exchange activity is autoinhibited by the PH domain.</text>
</comment>